<name>PCNA2_THEKO</name>
<proteinExistence type="evidence at protein level"/>
<accession>Q5JFD3</accession>
<gene>
    <name evidence="1" type="primary">pcn2</name>
    <name type="ordered locus">TK0582</name>
</gene>
<organism>
    <name type="scientific">Thermococcus kodakarensis (strain ATCC BAA-918 / JCM 12380 / KOD1)</name>
    <name type="common">Pyrococcus kodakaraensis (strain KOD1)</name>
    <dbReference type="NCBI Taxonomy" id="69014"/>
    <lineage>
        <taxon>Archaea</taxon>
        <taxon>Methanobacteriati</taxon>
        <taxon>Methanobacteriota</taxon>
        <taxon>Thermococci</taxon>
        <taxon>Thermococcales</taxon>
        <taxon>Thermococcaceae</taxon>
        <taxon>Thermococcus</taxon>
    </lineage>
</organism>
<reference key="1">
    <citation type="journal article" date="2005" name="Genome Res.">
        <title>Complete genome sequence of the hyperthermophilic archaeon Thermococcus kodakaraensis KOD1 and comparison with Pyrococcus genomes.</title>
        <authorList>
            <person name="Fukui T."/>
            <person name="Atomi H."/>
            <person name="Kanai T."/>
            <person name="Matsumi R."/>
            <person name="Fujiwara S."/>
            <person name="Imanaka T."/>
        </authorList>
    </citation>
    <scope>NUCLEOTIDE SEQUENCE [LARGE SCALE GENOMIC DNA]</scope>
    <source>
        <strain>ATCC BAA-918 / JCM 12380 / KOD1</strain>
    </source>
</reference>
<reference key="2">
    <citation type="journal article" date="2014" name="Nucleic Acids Res.">
        <title>A novel mechanism for regulating the activity of proliferating cell nuclear antigen by a small protein.</title>
        <authorList>
            <person name="Li Z."/>
            <person name="Huang R.Y."/>
            <person name="Yopp D.C."/>
            <person name="Hileman T.H."/>
            <person name="Santangelo T.J."/>
            <person name="Hurwitz J."/>
            <person name="Hudgens J.W."/>
            <person name="Kelman Z."/>
        </authorList>
    </citation>
    <scope>ACTIVITY REGULATION</scope>
    <scope>INTERACTION WITH TIP</scope>
</reference>
<evidence type="ECO:0000255" key="1">
    <source>
        <dbReference type="HAMAP-Rule" id="MF_00317"/>
    </source>
</evidence>
<evidence type="ECO:0000269" key="2">
    <source>
    </source>
</evidence>
<evidence type="ECO:0007829" key="3">
    <source>
        <dbReference type="PDB" id="3LX2"/>
    </source>
</evidence>
<keyword id="KW-0002">3D-structure</keyword>
<keyword id="KW-0235">DNA replication</keyword>
<keyword id="KW-0238">DNA-binding</keyword>
<keyword id="KW-1185">Reference proteome</keyword>
<protein>
    <recommendedName>
        <fullName evidence="1">DNA polymerase sliding clamp 2</fullName>
    </recommendedName>
    <alternativeName>
        <fullName evidence="1">Proliferating cell nuclear antigen homolog 2</fullName>
        <shortName evidence="1">PCNA 2</shortName>
    </alternativeName>
</protein>
<sequence length="253" mass="28447">MTFEIVFDSAREFESLIATLEKFFDEAVFQVNMEGIQMRAIDPSRVVLVDLNLPEMLFSKYSVESEEAIAFDLKRFLKVLKLARSRDTLVLRKGGENFLEVGLLGDENTWFKLPLIDANTPEIEIPSLPWTVKAVVLAGALKRAVKAAKLVSDSIYFMATPEKLTFKAEGNDSEVRTVLTMEDPGLLDLEHKMTKAKSAYGVAYLEDILRSLADADEVIIRFGFDIPLLLKYMVRDAGEVSFLIAPRVEEGRS</sequence>
<feature type="chain" id="PRO_0000149209" description="DNA polymerase sliding clamp 2">
    <location>
        <begin position="1"/>
        <end position="253"/>
    </location>
</feature>
<feature type="strand" evidence="3">
    <location>
        <begin position="3"/>
        <end position="8"/>
    </location>
</feature>
<feature type="helix" evidence="3">
    <location>
        <begin position="10"/>
        <end position="21"/>
    </location>
</feature>
<feature type="strand" evidence="3">
    <location>
        <begin position="25"/>
        <end position="31"/>
    </location>
</feature>
<feature type="strand" evidence="3">
    <location>
        <begin position="33"/>
        <end position="41"/>
    </location>
</feature>
<feature type="strand" evidence="3">
    <location>
        <begin position="47"/>
        <end position="54"/>
    </location>
</feature>
<feature type="helix" evidence="3">
    <location>
        <begin position="55"/>
        <end position="57"/>
    </location>
</feature>
<feature type="strand" evidence="3">
    <location>
        <begin position="58"/>
        <end position="65"/>
    </location>
</feature>
<feature type="strand" evidence="3">
    <location>
        <begin position="67"/>
        <end position="72"/>
    </location>
</feature>
<feature type="helix" evidence="3">
    <location>
        <begin position="73"/>
        <end position="80"/>
    </location>
</feature>
<feature type="strand" evidence="3">
    <location>
        <begin position="88"/>
        <end position="93"/>
    </location>
</feature>
<feature type="strand" evidence="3">
    <location>
        <begin position="95"/>
        <end position="114"/>
    </location>
</feature>
<feature type="strand" evidence="3">
    <location>
        <begin position="132"/>
        <end position="137"/>
    </location>
</feature>
<feature type="helix" evidence="3">
    <location>
        <begin position="138"/>
        <end position="151"/>
    </location>
</feature>
<feature type="strand" evidence="3">
    <location>
        <begin position="153"/>
        <end position="159"/>
    </location>
</feature>
<feature type="strand" evidence="3">
    <location>
        <begin position="164"/>
        <end position="169"/>
    </location>
</feature>
<feature type="strand" evidence="3">
    <location>
        <begin position="174"/>
        <end position="179"/>
    </location>
</feature>
<feature type="strand" evidence="3">
    <location>
        <begin position="186"/>
        <end position="194"/>
    </location>
</feature>
<feature type="strand" evidence="3">
    <location>
        <begin position="196"/>
        <end position="201"/>
    </location>
</feature>
<feature type="helix" evidence="3">
    <location>
        <begin position="202"/>
        <end position="209"/>
    </location>
</feature>
<feature type="strand" evidence="3">
    <location>
        <begin position="210"/>
        <end position="212"/>
    </location>
</feature>
<feature type="strand" evidence="3">
    <location>
        <begin position="216"/>
        <end position="222"/>
    </location>
</feature>
<feature type="strand" evidence="3">
    <location>
        <begin position="228"/>
        <end position="234"/>
    </location>
</feature>
<feature type="turn" evidence="3">
    <location>
        <begin position="235"/>
        <end position="237"/>
    </location>
</feature>
<feature type="strand" evidence="3">
    <location>
        <begin position="238"/>
        <end position="244"/>
    </location>
</feature>
<dbReference type="EMBL" id="AP006878">
    <property type="protein sequence ID" value="BAD84771.1"/>
    <property type="molecule type" value="Genomic_DNA"/>
</dbReference>
<dbReference type="RefSeq" id="WP_011249537.1">
    <property type="nucleotide sequence ID" value="NC_006624.1"/>
</dbReference>
<dbReference type="PDB" id="3LX2">
    <property type="method" value="X-ray"/>
    <property type="resolution" value="2.40 A"/>
    <property type="chains" value="A/B/C=1-253"/>
</dbReference>
<dbReference type="PDBsum" id="3LX2"/>
<dbReference type="SMR" id="Q5JFD3"/>
<dbReference type="DIP" id="DIP-59609N"/>
<dbReference type="FunCoup" id="Q5JFD3">
    <property type="interactions" value="162"/>
</dbReference>
<dbReference type="STRING" id="69014.TK0582"/>
<dbReference type="EnsemblBacteria" id="BAD84771">
    <property type="protein sequence ID" value="BAD84771"/>
    <property type="gene ID" value="TK0582"/>
</dbReference>
<dbReference type="GeneID" id="78447096"/>
<dbReference type="KEGG" id="tko:TK0582"/>
<dbReference type="PATRIC" id="fig|69014.16.peg.567"/>
<dbReference type="eggNOG" id="arCOG00488">
    <property type="taxonomic scope" value="Archaea"/>
</dbReference>
<dbReference type="HOGENOM" id="CLU_043978_1_1_2"/>
<dbReference type="InParanoid" id="Q5JFD3"/>
<dbReference type="OrthoDB" id="14749at2157"/>
<dbReference type="PhylomeDB" id="Q5JFD3"/>
<dbReference type="EvolutionaryTrace" id="Q5JFD3"/>
<dbReference type="Proteomes" id="UP000000536">
    <property type="component" value="Chromosome"/>
</dbReference>
<dbReference type="GO" id="GO:0003677">
    <property type="term" value="F:DNA binding"/>
    <property type="evidence" value="ECO:0007669"/>
    <property type="project" value="UniProtKB-UniRule"/>
</dbReference>
<dbReference type="GO" id="GO:0030337">
    <property type="term" value="F:DNA polymerase processivity factor activity"/>
    <property type="evidence" value="ECO:0000318"/>
    <property type="project" value="GO_Central"/>
</dbReference>
<dbReference type="GO" id="GO:0042802">
    <property type="term" value="F:identical protein binding"/>
    <property type="evidence" value="ECO:0000353"/>
    <property type="project" value="IntAct"/>
</dbReference>
<dbReference type="GO" id="GO:0006272">
    <property type="term" value="P:leading strand elongation"/>
    <property type="evidence" value="ECO:0000318"/>
    <property type="project" value="GO_Central"/>
</dbReference>
<dbReference type="GO" id="GO:0006275">
    <property type="term" value="P:regulation of DNA replication"/>
    <property type="evidence" value="ECO:0007669"/>
    <property type="project" value="UniProtKB-UniRule"/>
</dbReference>
<dbReference type="CDD" id="cd00577">
    <property type="entry name" value="PCNA"/>
    <property type="match status" value="1"/>
</dbReference>
<dbReference type="FunFam" id="3.70.10.10:FF:000038">
    <property type="entry name" value="DNA polymerase sliding clamp 1"/>
    <property type="match status" value="1"/>
</dbReference>
<dbReference type="Gene3D" id="3.70.10.10">
    <property type="match status" value="1"/>
</dbReference>
<dbReference type="HAMAP" id="MF_00317">
    <property type="entry name" value="DNApol_clamp_arch"/>
    <property type="match status" value="1"/>
</dbReference>
<dbReference type="InterPro" id="IPR046938">
    <property type="entry name" value="DNA_clamp_sf"/>
</dbReference>
<dbReference type="InterPro" id="IPR000730">
    <property type="entry name" value="Pr_cel_nuc_antig"/>
</dbReference>
<dbReference type="InterPro" id="IPR022649">
    <property type="entry name" value="Pr_cel_nuc_antig_C"/>
</dbReference>
<dbReference type="InterPro" id="IPR022659">
    <property type="entry name" value="Pr_cel_nuc_antig_CS"/>
</dbReference>
<dbReference type="InterPro" id="IPR022648">
    <property type="entry name" value="Pr_cel_nuc_antig_N"/>
</dbReference>
<dbReference type="NCBIfam" id="NF002219">
    <property type="entry name" value="PRK01115.1-2"/>
    <property type="match status" value="1"/>
</dbReference>
<dbReference type="PANTHER" id="PTHR11352">
    <property type="entry name" value="PROLIFERATING CELL NUCLEAR ANTIGEN"/>
    <property type="match status" value="1"/>
</dbReference>
<dbReference type="PANTHER" id="PTHR11352:SF0">
    <property type="entry name" value="PROLIFERATING CELL NUCLEAR ANTIGEN"/>
    <property type="match status" value="1"/>
</dbReference>
<dbReference type="Pfam" id="PF02747">
    <property type="entry name" value="PCNA_C"/>
    <property type="match status" value="1"/>
</dbReference>
<dbReference type="Pfam" id="PF00705">
    <property type="entry name" value="PCNA_N"/>
    <property type="match status" value="1"/>
</dbReference>
<dbReference type="PRINTS" id="PR00339">
    <property type="entry name" value="PCNACYCLIN"/>
</dbReference>
<dbReference type="SUPFAM" id="SSF55979">
    <property type="entry name" value="DNA clamp"/>
    <property type="match status" value="2"/>
</dbReference>
<dbReference type="PROSITE" id="PS01251">
    <property type="entry name" value="PCNA_1"/>
    <property type="match status" value="1"/>
</dbReference>
<comment type="function">
    <text evidence="1">Sliding clamp subunit that acts as a moving platform for DNA processing. Responsible for tethering the catalytic subunit of DNA polymerase and other proteins to DNA during high-speed replication.</text>
</comment>
<comment type="activity regulation">
    <text evidence="2">Inhibited by interaction with the PCNA inhibitor TIP.</text>
</comment>
<comment type="subunit">
    <text evidence="1 2">Homotrimer. The subunits circularize to form a toroid; DNA passes through its center. Replication factor C (RFC) is required to load the toroid on the DNA (By similarity). Interacts with TIP (PubMed:24728986).</text>
</comment>
<comment type="interaction">
    <interactant intactId="EBI-15908562">
        <id>Q5JFD3</id>
    </interactant>
    <interactant intactId="EBI-15908562">
        <id>Q5JFD3</id>
        <label>pcn2</label>
    </interactant>
    <organismsDiffer>false</organismsDiffer>
    <experiments>3</experiments>
</comment>
<comment type="similarity">
    <text evidence="1">Belongs to the PCNA family.</text>
</comment>